<feature type="chain" id="PRO_1000084390" description="Glycerol-3-phosphate acyltransferase">
    <location>
        <begin position="1"/>
        <end position="189"/>
    </location>
</feature>
<feature type="transmembrane region" description="Helical" evidence="1">
    <location>
        <begin position="1"/>
        <end position="21"/>
    </location>
</feature>
<feature type="transmembrane region" description="Helical" evidence="1">
    <location>
        <begin position="50"/>
        <end position="70"/>
    </location>
</feature>
<feature type="transmembrane region" description="Helical" evidence="1">
    <location>
        <begin position="77"/>
        <end position="97"/>
    </location>
</feature>
<feature type="transmembrane region" description="Helical" evidence="1">
    <location>
        <begin position="111"/>
        <end position="131"/>
    </location>
</feature>
<feature type="transmembrane region" description="Helical" evidence="1">
    <location>
        <begin position="151"/>
        <end position="171"/>
    </location>
</feature>
<dbReference type="EC" id="2.3.1.275" evidence="1"/>
<dbReference type="EMBL" id="CP000926">
    <property type="protein sequence ID" value="ABY96333.1"/>
    <property type="molecule type" value="Genomic_DNA"/>
</dbReference>
<dbReference type="RefSeq" id="WP_012270190.1">
    <property type="nucleotide sequence ID" value="NC_010322.1"/>
</dbReference>
<dbReference type="SMR" id="B0KJ83"/>
<dbReference type="KEGG" id="ppg:PputGB1_0422"/>
<dbReference type="eggNOG" id="COG0344">
    <property type="taxonomic scope" value="Bacteria"/>
</dbReference>
<dbReference type="HOGENOM" id="CLU_081254_0_0_6"/>
<dbReference type="UniPathway" id="UPA00085"/>
<dbReference type="Proteomes" id="UP000002157">
    <property type="component" value="Chromosome"/>
</dbReference>
<dbReference type="GO" id="GO:0005886">
    <property type="term" value="C:plasma membrane"/>
    <property type="evidence" value="ECO:0007669"/>
    <property type="project" value="UniProtKB-SubCell"/>
</dbReference>
<dbReference type="GO" id="GO:0043772">
    <property type="term" value="F:acyl-phosphate glycerol-3-phosphate acyltransferase activity"/>
    <property type="evidence" value="ECO:0007669"/>
    <property type="project" value="UniProtKB-UniRule"/>
</dbReference>
<dbReference type="GO" id="GO:0008654">
    <property type="term" value="P:phospholipid biosynthetic process"/>
    <property type="evidence" value="ECO:0007669"/>
    <property type="project" value="UniProtKB-UniRule"/>
</dbReference>
<dbReference type="HAMAP" id="MF_01043">
    <property type="entry name" value="PlsY"/>
    <property type="match status" value="1"/>
</dbReference>
<dbReference type="InterPro" id="IPR003811">
    <property type="entry name" value="G3P_acylTferase_PlsY"/>
</dbReference>
<dbReference type="NCBIfam" id="TIGR00023">
    <property type="entry name" value="glycerol-3-phosphate 1-O-acyltransferase PlsY"/>
    <property type="match status" value="1"/>
</dbReference>
<dbReference type="PANTHER" id="PTHR30309:SF0">
    <property type="entry name" value="GLYCEROL-3-PHOSPHATE ACYLTRANSFERASE-RELATED"/>
    <property type="match status" value="1"/>
</dbReference>
<dbReference type="PANTHER" id="PTHR30309">
    <property type="entry name" value="INNER MEMBRANE PROTEIN YGIH"/>
    <property type="match status" value="1"/>
</dbReference>
<dbReference type="Pfam" id="PF02660">
    <property type="entry name" value="G3P_acyltransf"/>
    <property type="match status" value="1"/>
</dbReference>
<dbReference type="SMART" id="SM01207">
    <property type="entry name" value="G3P_acyltransf"/>
    <property type="match status" value="1"/>
</dbReference>
<sequence length="189" mass="20366">MFWLLALLAYLLGSLSFAIVLSRLSGSPDPRSSGSGNAGATNMLRLAGRKLAILTLLGDLCKGLLPVLLARAAGLDLHAQAWVGVCAVLGHLFPLYFRFQGGKGVATAAGMLMGLYFPAALLAIGAWLLTFYLTRTSSLAALIATPLTLPLLAWREPEALLPITVLTAMIVWRHRKNLRDLFAGRERHF</sequence>
<evidence type="ECO:0000255" key="1">
    <source>
        <dbReference type="HAMAP-Rule" id="MF_01043"/>
    </source>
</evidence>
<reference key="1">
    <citation type="submission" date="2008-01" db="EMBL/GenBank/DDBJ databases">
        <title>Complete sequence of Pseudomonas putida GB-1.</title>
        <authorList>
            <consortium name="US DOE Joint Genome Institute"/>
            <person name="Copeland A."/>
            <person name="Lucas S."/>
            <person name="Lapidus A."/>
            <person name="Barry K."/>
            <person name="Glavina del Rio T."/>
            <person name="Dalin E."/>
            <person name="Tice H."/>
            <person name="Pitluck S."/>
            <person name="Bruce D."/>
            <person name="Goodwin L."/>
            <person name="Chertkov O."/>
            <person name="Brettin T."/>
            <person name="Detter J.C."/>
            <person name="Han C."/>
            <person name="Kuske C.R."/>
            <person name="Schmutz J."/>
            <person name="Larimer F."/>
            <person name="Land M."/>
            <person name="Hauser L."/>
            <person name="Kyrpides N."/>
            <person name="Kim E."/>
            <person name="McCarthy J.K."/>
            <person name="Richardson P."/>
        </authorList>
    </citation>
    <scope>NUCLEOTIDE SEQUENCE [LARGE SCALE GENOMIC DNA]</scope>
    <source>
        <strain>GB-1</strain>
    </source>
</reference>
<accession>B0KJ83</accession>
<gene>
    <name evidence="1" type="primary">plsY</name>
    <name type="ordered locus">PputGB1_0422</name>
</gene>
<keyword id="KW-0997">Cell inner membrane</keyword>
<keyword id="KW-1003">Cell membrane</keyword>
<keyword id="KW-0444">Lipid biosynthesis</keyword>
<keyword id="KW-0443">Lipid metabolism</keyword>
<keyword id="KW-0472">Membrane</keyword>
<keyword id="KW-0594">Phospholipid biosynthesis</keyword>
<keyword id="KW-1208">Phospholipid metabolism</keyword>
<keyword id="KW-0808">Transferase</keyword>
<keyword id="KW-0812">Transmembrane</keyword>
<keyword id="KW-1133">Transmembrane helix</keyword>
<name>PLSY_PSEPG</name>
<protein>
    <recommendedName>
        <fullName evidence="1">Glycerol-3-phosphate acyltransferase</fullName>
    </recommendedName>
    <alternativeName>
        <fullName evidence="1">Acyl-PO4 G3P acyltransferase</fullName>
    </alternativeName>
    <alternativeName>
        <fullName evidence="1">Acyl-phosphate--glycerol-3-phosphate acyltransferase</fullName>
    </alternativeName>
    <alternativeName>
        <fullName evidence="1">G3P acyltransferase</fullName>
        <shortName evidence="1">GPAT</shortName>
        <ecNumber evidence="1">2.3.1.275</ecNumber>
    </alternativeName>
    <alternativeName>
        <fullName evidence="1">Lysophosphatidic acid synthase</fullName>
        <shortName evidence="1">LPA synthase</shortName>
    </alternativeName>
</protein>
<comment type="function">
    <text evidence="1">Catalyzes the transfer of an acyl group from acyl-phosphate (acyl-PO(4)) to glycerol-3-phosphate (G3P) to form lysophosphatidic acid (LPA). This enzyme utilizes acyl-phosphate as fatty acyl donor, but not acyl-CoA or acyl-ACP.</text>
</comment>
<comment type="catalytic activity">
    <reaction evidence="1">
        <text>an acyl phosphate + sn-glycerol 3-phosphate = a 1-acyl-sn-glycero-3-phosphate + phosphate</text>
        <dbReference type="Rhea" id="RHEA:34075"/>
        <dbReference type="ChEBI" id="CHEBI:43474"/>
        <dbReference type="ChEBI" id="CHEBI:57597"/>
        <dbReference type="ChEBI" id="CHEBI:57970"/>
        <dbReference type="ChEBI" id="CHEBI:59918"/>
        <dbReference type="EC" id="2.3.1.275"/>
    </reaction>
</comment>
<comment type="pathway">
    <text evidence="1">Lipid metabolism; phospholipid metabolism.</text>
</comment>
<comment type="subunit">
    <text evidence="1">Probably interacts with PlsX.</text>
</comment>
<comment type="subcellular location">
    <subcellularLocation>
        <location evidence="1">Cell inner membrane</location>
        <topology evidence="1">Multi-pass membrane protein</topology>
    </subcellularLocation>
</comment>
<comment type="similarity">
    <text evidence="1">Belongs to the PlsY family.</text>
</comment>
<proteinExistence type="inferred from homology"/>
<organism>
    <name type="scientific">Pseudomonas putida (strain GB-1)</name>
    <dbReference type="NCBI Taxonomy" id="76869"/>
    <lineage>
        <taxon>Bacteria</taxon>
        <taxon>Pseudomonadati</taxon>
        <taxon>Pseudomonadota</taxon>
        <taxon>Gammaproteobacteria</taxon>
        <taxon>Pseudomonadales</taxon>
        <taxon>Pseudomonadaceae</taxon>
        <taxon>Pseudomonas</taxon>
    </lineage>
</organism>